<comment type="function">
    <text evidence="3 4 5">Mediates the ATP-dependent translocation of the undecaprenylpyrophosphate-linked heptasaccharide intermediate across the cell membrane; this is an essential step during the N-linked protein glycosylation pathway. Transport across the membrane is effected via ATP-driven conformation changes. Most likely, only the polar and charged part of the glycolipid enter the substrate-binding cavity, and the lipid tail remains exposed to the membrane lipids during the transmembrane flipping process.</text>
</comment>
<comment type="catalytic activity">
    <reaction evidence="3 5">
        <text>ATP + H2O + lipopolysaccharideSide 1 = ADP + phosphate + lipopolysaccharideSide 2.</text>
        <dbReference type="EC" id="7.5.2.5"/>
    </reaction>
</comment>
<comment type="pathway">
    <text evidence="3 5">Protein modification; protein glycosylation.</text>
</comment>
<comment type="subunit">
    <text evidence="5">Homodimer; domain-swapped. Helices that arise in transmembrane regions 4 and 5 from one subunit cross over and contact the nucleotide-binding domain from the other subunit.</text>
</comment>
<comment type="subcellular location">
    <subcellularLocation>
        <location evidence="7">Cell inner membrane</location>
        <topology evidence="5 6">Multi-pass membrane protein</topology>
    </subcellularLocation>
</comment>
<comment type="domain">
    <text evidence="5">In the absence of ligand, the homodimer has a V-shaped structure with a large cavity that is accessible from the cytoplasmic side.</text>
</comment>
<comment type="disruption phenotype">
    <text evidence="3">Hypoglycosylation phenotype.</text>
</comment>
<comment type="similarity">
    <text evidence="6">Belongs to the ABC transporter superfamily.</text>
</comment>
<evidence type="ECO:0000255" key="1">
    <source>
        <dbReference type="PROSITE-ProRule" id="PRU00434"/>
    </source>
</evidence>
<evidence type="ECO:0000255" key="2">
    <source>
        <dbReference type="PROSITE-ProRule" id="PRU00441"/>
    </source>
</evidence>
<evidence type="ECO:0000269" key="3">
    <source>
    </source>
</evidence>
<evidence type="ECO:0000269" key="4">
    <source>
    </source>
</evidence>
<evidence type="ECO:0000269" key="5">
    <source>
    </source>
</evidence>
<evidence type="ECO:0000305" key="6"/>
<evidence type="ECO:0000305" key="7">
    <source>
    </source>
</evidence>
<organism>
    <name type="scientific">Campylobacter jejuni subsp. jejuni serotype O:2 (strain ATCC 700819 / NCTC 11168)</name>
    <dbReference type="NCBI Taxonomy" id="192222"/>
    <lineage>
        <taxon>Bacteria</taxon>
        <taxon>Pseudomonadati</taxon>
        <taxon>Campylobacterota</taxon>
        <taxon>Epsilonproteobacteria</taxon>
        <taxon>Campylobacterales</taxon>
        <taxon>Campylobacteraceae</taxon>
        <taxon>Campylobacter</taxon>
    </lineage>
</organism>
<feature type="chain" id="PRO_0000422584" description="Protein glycosylation K">
    <location>
        <begin position="1"/>
        <end position="564"/>
    </location>
</feature>
<feature type="topological domain" description="Cytoplasmic" evidence="7">
    <location>
        <begin position="1"/>
        <end position="15"/>
    </location>
</feature>
<feature type="transmembrane region" description="Helical" evidence="2 7">
    <location>
        <begin position="16"/>
        <end position="38"/>
    </location>
</feature>
<feature type="topological domain" description="Extracellular" evidence="7">
    <location>
        <begin position="39"/>
        <end position="76"/>
    </location>
</feature>
<feature type="transmembrane region" description="Helical" evidence="2 7">
    <location>
        <begin position="77"/>
        <end position="98"/>
    </location>
</feature>
<feature type="topological domain" description="Cytoplasmic" evidence="7">
    <location>
        <begin position="99"/>
        <end position="149"/>
    </location>
</feature>
<feature type="transmembrane region" description="Helical" evidence="2 7">
    <location>
        <begin position="150"/>
        <end position="170"/>
    </location>
</feature>
<feature type="topological domain" description="Extracellular" evidence="7">
    <location>
        <begin position="171"/>
        <end position="173"/>
    </location>
</feature>
<feature type="transmembrane region" description="Helical" evidence="2 7">
    <location>
        <begin position="174"/>
        <end position="197"/>
    </location>
</feature>
<feature type="topological domain" description="Cytoplasmic" evidence="7">
    <location>
        <begin position="198"/>
        <end position="254"/>
    </location>
</feature>
<feature type="transmembrane region" description="Helical" evidence="2 7">
    <location>
        <begin position="255"/>
        <end position="276"/>
    </location>
</feature>
<feature type="topological domain" description="Extracellular" evidence="7">
    <location>
        <begin position="277"/>
        <end position="292"/>
    </location>
</feature>
<feature type="transmembrane region" description="Helical" evidence="2 7">
    <location>
        <begin position="293"/>
        <end position="314"/>
    </location>
</feature>
<feature type="topological domain" description="Cytoplasmic" evidence="7">
    <location>
        <begin position="315"/>
        <end position="564"/>
    </location>
</feature>
<feature type="domain" description="ABC transmembrane type-1" evidence="2">
    <location>
        <begin position="17"/>
        <end position="319"/>
    </location>
</feature>
<feature type="domain" description="ABC transporter" evidence="1">
    <location>
        <begin position="349"/>
        <end position="564"/>
    </location>
</feature>
<feature type="region of interest" description="Important for stimulation of ATPase activity by lipid-linked oligosaccharides and subsequent translocation of lipid-linked oligosaccharides" evidence="5">
    <location>
        <begin position="46"/>
        <end position="67"/>
    </location>
</feature>
<feature type="binding site" evidence="1">
    <location>
        <begin position="382"/>
        <end position="389"/>
    </location>
    <ligand>
        <name>ATP</name>
        <dbReference type="ChEBI" id="CHEBI:30616"/>
    </ligand>
</feature>
<feature type="mutagenesis site" description="Abolishes stimulation of ATPase activity by lipid-linked oligosaccharide binding. Abolishes translocation of lipid-linked oligosaccharide." evidence="5">
    <original>SDFSYFDRNKYLISLKEYLNIP</original>
    <variation>GSSGSSGS</variation>
    <location>
        <begin position="46"/>
        <end position="67"/>
    </location>
</feature>
<feature type="mutagenesis site" description="Abolishes stimulation of ATPase activity by lipid-linked oligosaccharide binding and decreases translocation of lipid-linked oligosaccharide; when associated with A-56 and A-63." evidence="5">
    <original>Y</original>
    <variation>A</variation>
    <location>
        <position position="50"/>
    </location>
</feature>
<feature type="mutagenesis site" description="Abolishes stimulation of ATPase activity by lipid-linked oligosaccharide binding. Strongly decreases translocation of lipid-linked oligosaccharide." evidence="5">
    <original>RNK</original>
    <variation>ANA</variation>
    <location>
        <begin position="53"/>
        <end position="55"/>
    </location>
</feature>
<feature type="mutagenesis site" description="Abolishes stimulation of ATPase activity by lipid-linked oligosaccharide binding and decreases translocation of lipid-linked oligosaccharide; when associated with A-50 and A-63." evidence="5">
    <original>Y</original>
    <variation>A</variation>
    <location>
        <position position="56"/>
    </location>
</feature>
<feature type="mutagenesis site" description="Abolishes stimulation of ATPase activity by lipid-linked oligosaccharide binding and decreases translocation of lipid-linked oligosaccharide; when associated with A-50 and A-56." evidence="5">
    <original>Y</original>
    <variation>A</variation>
    <location>
        <position position="63"/>
    </location>
</feature>
<feature type="mutagenesis site" description="Abolishes translocation of lipid-linked oligosaccharide; when associated with A-260; A-302 and A-309." evidence="5">
    <original>R</original>
    <variation>A</variation>
    <location>
        <position position="86"/>
    </location>
</feature>
<feature type="mutagenesis site" description="Abolishes translocation of lipid-linked oligosaccharide; when associated with A-86; A-302 and A-309." evidence="5">
    <original>R</original>
    <variation>A</variation>
    <location>
        <position position="260"/>
    </location>
</feature>
<feature type="mutagenesis site" description="Abolishes translocation of lipid-linked oligosaccharide; when associated with A-86; A-260 and A-309." evidence="5">
    <original>R</original>
    <variation>A</variation>
    <location>
        <position position="302"/>
    </location>
</feature>
<feature type="mutagenesis site" description="Abolishes translocation of lipid-linked oligosaccharide; when associated with A-86; A-260 and A-302." evidence="5">
    <original>R</original>
    <variation>A</variation>
    <location>
        <position position="309"/>
    </location>
</feature>
<feature type="mutagenesis site" description="Reduced efficiency of the N-linked protein glycosylation pathway." evidence="3">
    <original>K</original>
    <variation>A</variation>
    <location>
        <position position="388"/>
    </location>
</feature>
<feature type="mutagenesis site" description="Impaired N-linked protein glycosylation pathway." evidence="3">
    <original>S</original>
    <variation>A</variation>
    <location>
        <position position="389"/>
    </location>
</feature>
<feature type="mutagenesis site" description="Impaired N-linked protein glycosylation pathway." evidence="3">
    <original>G</original>
    <variation>D</variation>
    <location>
        <position position="488"/>
    </location>
</feature>
<feature type="mutagenesis site" description="No effect on the N-linked protein glycosylation pathway." evidence="3">
    <original>R</original>
    <variation>C</variation>
    <location>
        <position position="492"/>
    </location>
</feature>
<feature type="mutagenesis site" description="Reduced efficiency of the N-linked protein glycosylation pathway." evidence="3">
    <original>L</original>
    <variation>A</variation>
    <location>
        <position position="506"/>
    </location>
</feature>
<feature type="mutagenesis site" description="Abolishes ATPase activity and strongly reduces translocation of lipid-linked oligosaccharide." evidence="5">
    <original>E</original>
    <variation>Q</variation>
    <location>
        <position position="510"/>
    </location>
</feature>
<accession>Q0P9C4</accession>
<keyword id="KW-0002">3D-structure</keyword>
<keyword id="KW-0067">ATP-binding</keyword>
<keyword id="KW-0997">Cell inner membrane</keyword>
<keyword id="KW-1003">Cell membrane</keyword>
<keyword id="KW-0472">Membrane</keyword>
<keyword id="KW-0547">Nucleotide-binding</keyword>
<keyword id="KW-1185">Reference proteome</keyword>
<keyword id="KW-1278">Translocase</keyword>
<keyword id="KW-0812">Transmembrane</keyword>
<keyword id="KW-1133">Transmembrane helix</keyword>
<keyword id="KW-0813">Transport</keyword>
<name>PGLK_CAMJE</name>
<dbReference type="EC" id="7.5.2.5" evidence="3 5"/>
<dbReference type="EMBL" id="AL111168">
    <property type="protein sequence ID" value="CAL35247.1"/>
    <property type="molecule type" value="Genomic_DNA"/>
</dbReference>
<dbReference type="PIR" id="E81317">
    <property type="entry name" value="E81317"/>
</dbReference>
<dbReference type="RefSeq" id="WP_002858308.1">
    <property type="nucleotide sequence ID" value="NZ_SZUC01000001.1"/>
</dbReference>
<dbReference type="RefSeq" id="YP_002344523.1">
    <property type="nucleotide sequence ID" value="NC_002163.1"/>
</dbReference>
<dbReference type="PDB" id="5C73">
    <property type="method" value="X-ray"/>
    <property type="resolution" value="5.90 A"/>
    <property type="chains" value="A/B/C/F/G/K=1-564"/>
</dbReference>
<dbReference type="PDB" id="5C76">
    <property type="method" value="X-ray"/>
    <property type="resolution" value="3.94 A"/>
    <property type="chains" value="A/B/C/D=1-564"/>
</dbReference>
<dbReference type="PDB" id="5C78">
    <property type="method" value="X-ray"/>
    <property type="resolution" value="2.90 A"/>
    <property type="chains" value="A/B/C/D=1-564"/>
</dbReference>
<dbReference type="PDB" id="5NBD">
    <property type="method" value="X-ray"/>
    <property type="resolution" value="3.90 A"/>
    <property type="chains" value="A/B=1-564"/>
</dbReference>
<dbReference type="PDBsum" id="5C73"/>
<dbReference type="PDBsum" id="5C76"/>
<dbReference type="PDBsum" id="5C78"/>
<dbReference type="PDBsum" id="5NBD"/>
<dbReference type="SMR" id="Q0P9C4"/>
<dbReference type="STRING" id="192222.Cj1130c"/>
<dbReference type="TCDB" id="3.A.1.106.15">
    <property type="family name" value="the atp-binding cassette (abc) superfamily"/>
</dbReference>
<dbReference type="PaxDb" id="192222-Cj1130c"/>
<dbReference type="ABCD" id="Q0P9C4">
    <property type="antibodies" value="1 sequenced antibody"/>
</dbReference>
<dbReference type="EnsemblBacteria" id="CAL35247">
    <property type="protein sequence ID" value="CAL35247"/>
    <property type="gene ID" value="Cj1130c"/>
</dbReference>
<dbReference type="GeneID" id="905421"/>
<dbReference type="KEGG" id="cje:Cj1130c"/>
<dbReference type="PATRIC" id="fig|192222.6.peg.1112"/>
<dbReference type="eggNOG" id="COG1132">
    <property type="taxonomic scope" value="Bacteria"/>
</dbReference>
<dbReference type="HOGENOM" id="CLU_000604_84_3_7"/>
<dbReference type="OrthoDB" id="9760168at2"/>
<dbReference type="BioCyc" id="MetaCyc:MONOMER-21510"/>
<dbReference type="UniPathway" id="UPA00378"/>
<dbReference type="Proteomes" id="UP000000799">
    <property type="component" value="Chromosome"/>
</dbReference>
<dbReference type="GO" id="GO:0005886">
    <property type="term" value="C:plasma membrane"/>
    <property type="evidence" value="ECO:0007669"/>
    <property type="project" value="UniProtKB-SubCell"/>
</dbReference>
<dbReference type="GO" id="GO:0140359">
    <property type="term" value="F:ABC-type transporter activity"/>
    <property type="evidence" value="ECO:0007669"/>
    <property type="project" value="InterPro"/>
</dbReference>
<dbReference type="GO" id="GO:0005524">
    <property type="term" value="F:ATP binding"/>
    <property type="evidence" value="ECO:0007669"/>
    <property type="project" value="UniProtKB-KW"/>
</dbReference>
<dbReference type="GO" id="GO:0016887">
    <property type="term" value="F:ATP hydrolysis activity"/>
    <property type="evidence" value="ECO:0007669"/>
    <property type="project" value="InterPro"/>
</dbReference>
<dbReference type="GO" id="GO:0034040">
    <property type="term" value="F:ATPase-coupled lipid transmembrane transporter activity"/>
    <property type="evidence" value="ECO:0007669"/>
    <property type="project" value="TreeGrafter"/>
</dbReference>
<dbReference type="GO" id="GO:0015437">
    <property type="term" value="F:lipopolysaccharide floppase activity"/>
    <property type="evidence" value="ECO:0000314"/>
    <property type="project" value="UniProtKB"/>
</dbReference>
<dbReference type="GO" id="GO:0006487">
    <property type="term" value="P:protein N-linked glycosylation"/>
    <property type="evidence" value="ECO:0000314"/>
    <property type="project" value="UniProtKB"/>
</dbReference>
<dbReference type="GO" id="GO:0018279">
    <property type="term" value="P:protein N-linked glycosylation via asparagine"/>
    <property type="evidence" value="ECO:0000314"/>
    <property type="project" value="UniProtKB"/>
</dbReference>
<dbReference type="CDD" id="cd18553">
    <property type="entry name" value="ABC_6TM_PglK_like"/>
    <property type="match status" value="1"/>
</dbReference>
<dbReference type="FunFam" id="1.20.1560.10:FF:000311">
    <property type="entry name" value="ABC transporter ATP-binding protein"/>
    <property type="match status" value="1"/>
</dbReference>
<dbReference type="FunFam" id="3.40.50.300:FF:001371">
    <property type="entry name" value="ABC transporter ATP-binding protein"/>
    <property type="match status" value="1"/>
</dbReference>
<dbReference type="Gene3D" id="1.20.1560.10">
    <property type="entry name" value="ABC transporter type 1, transmembrane domain"/>
    <property type="match status" value="1"/>
</dbReference>
<dbReference type="Gene3D" id="3.40.50.300">
    <property type="entry name" value="P-loop containing nucleotide triphosphate hydrolases"/>
    <property type="match status" value="1"/>
</dbReference>
<dbReference type="InterPro" id="IPR003593">
    <property type="entry name" value="AAA+_ATPase"/>
</dbReference>
<dbReference type="InterPro" id="IPR011527">
    <property type="entry name" value="ABC1_TM_dom"/>
</dbReference>
<dbReference type="InterPro" id="IPR036640">
    <property type="entry name" value="ABC1_TM_sf"/>
</dbReference>
<dbReference type="InterPro" id="IPR003439">
    <property type="entry name" value="ABC_transporter-like_ATP-bd"/>
</dbReference>
<dbReference type="InterPro" id="IPR017871">
    <property type="entry name" value="ABC_transporter-like_CS"/>
</dbReference>
<dbReference type="InterPro" id="IPR027417">
    <property type="entry name" value="P-loop_NTPase"/>
</dbReference>
<dbReference type="InterPro" id="IPR039421">
    <property type="entry name" value="Type_1_exporter"/>
</dbReference>
<dbReference type="PANTHER" id="PTHR24221">
    <property type="entry name" value="ATP-BINDING CASSETTE SUB-FAMILY B"/>
    <property type="match status" value="1"/>
</dbReference>
<dbReference type="PANTHER" id="PTHR24221:SF654">
    <property type="entry name" value="ATP-BINDING CASSETTE SUB-FAMILY B MEMBER 6"/>
    <property type="match status" value="1"/>
</dbReference>
<dbReference type="Pfam" id="PF00664">
    <property type="entry name" value="ABC_membrane"/>
    <property type="match status" value="1"/>
</dbReference>
<dbReference type="Pfam" id="PF00005">
    <property type="entry name" value="ABC_tran"/>
    <property type="match status" value="1"/>
</dbReference>
<dbReference type="SMART" id="SM00382">
    <property type="entry name" value="AAA"/>
    <property type="match status" value="1"/>
</dbReference>
<dbReference type="SUPFAM" id="SSF90123">
    <property type="entry name" value="ABC transporter transmembrane region"/>
    <property type="match status" value="1"/>
</dbReference>
<dbReference type="SUPFAM" id="SSF52540">
    <property type="entry name" value="P-loop containing nucleoside triphosphate hydrolases"/>
    <property type="match status" value="1"/>
</dbReference>
<dbReference type="PROSITE" id="PS50929">
    <property type="entry name" value="ABC_TM1F"/>
    <property type="match status" value="1"/>
</dbReference>
<dbReference type="PROSITE" id="PS00211">
    <property type="entry name" value="ABC_TRANSPORTER_1"/>
    <property type="match status" value="1"/>
</dbReference>
<dbReference type="PROSITE" id="PS50893">
    <property type="entry name" value="ABC_TRANSPORTER_2"/>
    <property type="match status" value="1"/>
</dbReference>
<sequence>MLKKLFFILSKEDKNFLFFLLVFSVFISFIETFAISLVMPFITLASDFSYFDRNKYLISLKEYLNIPVFEIIVYFGVGLIVFYVFRALLNAYYFHLLARFSKGRYHAIAYKVFSKFLNINYEKFTQKNQSEILKSITGEVYNLSTMISSFLLLMSEIFVVLLLYALMLLINYKITLFLSIFMVLNAFILVKILSPIIKKAGVRREEAMKNFFEILNTNLNNFKFIKLKTKEDGVLSLFKAQSEAFSKANITNESVAAVPRIYLEGIGFCVLVFIVVFLVLKNESDISGILSTISIFVLALYRLMPSANRIITSYHDLLYYHSSLDIIYQNLRQEEENLGEEKLSFNQELKICNLSFGYEGKKYLFKNLNLNIKKGEKIAFIGESGCGKSTLVDLIIGLLKPKEGQILIDEQELNANNTKNYRQKIGYIPQNIYLFNDSIAKNITFGDAVDEEKLNRVIKQANLEHFIKNLPQGVQTKVGDGGSNLSGGQKQRIAIARALYLEPEMLVLDEATSALDTQSEAKIMDEIYKISKDKTMIIIAHRLSTITQCDKVYRLEHGKLKEEK</sequence>
<protein>
    <recommendedName>
        <fullName>Protein glycosylation K</fullName>
        <ecNumber evidence="3 5">7.5.2.5</ecNumber>
    </recommendedName>
</protein>
<gene>
    <name type="primary">pglK</name>
    <name type="synonym">wlaB</name>
    <name type="ordered locus">Cj1130c</name>
</gene>
<proteinExistence type="evidence at protein level"/>
<reference key="1">
    <citation type="journal article" date="2000" name="Nature">
        <title>The genome sequence of the food-borne pathogen Campylobacter jejuni reveals hypervariable sequences.</title>
        <authorList>
            <person name="Parkhill J."/>
            <person name="Wren B.W."/>
            <person name="Mungall K.L."/>
            <person name="Ketley J.M."/>
            <person name="Churcher C.M."/>
            <person name="Basham D."/>
            <person name="Chillingworth T."/>
            <person name="Davies R.M."/>
            <person name="Feltwell T."/>
            <person name="Holroyd S."/>
            <person name="Jagels K."/>
            <person name="Karlyshev A.V."/>
            <person name="Moule S."/>
            <person name="Pallen M.J."/>
            <person name="Penn C.W."/>
            <person name="Quail M.A."/>
            <person name="Rajandream M.A."/>
            <person name="Rutherford K.M."/>
            <person name="van Vliet A.H.M."/>
            <person name="Whitehead S."/>
            <person name="Barrell B.G."/>
        </authorList>
    </citation>
    <scope>NUCLEOTIDE SEQUENCE [LARGE SCALE GENOMIC DNA]</scope>
    <source>
        <strain>ATCC 700819 / NCTC 11168</strain>
    </source>
</reference>
<reference key="2">
    <citation type="journal article" date="1998" name="Microbiology">
        <title>The lipopolysaccharide biosynthesis locus of Campylobacter jejuni 81116.</title>
        <authorList>
            <person name="Fry B.N."/>
            <person name="Korolik V."/>
            <person name="ten Brinke J.A."/>
            <person name="Pennings M.T.T."/>
            <person name="Zalm R."/>
            <person name="Teunis B.J.J."/>
            <person name="Coloe P.J."/>
            <person name="van der Zeijst B.A.M."/>
        </authorList>
    </citation>
    <scope>IDENTIFICATION</scope>
    <source>
        <strain>ATCC 700819 / NCTC 11168</strain>
    </source>
</reference>
<reference key="3">
    <citation type="journal article" date="2006" name="EMBO J.">
        <title>Two distinct but interchangeable mechanisms for flipping of lipid-linked oligosaccharides.</title>
        <authorList>
            <person name="Alaimo C."/>
            <person name="Catrein I."/>
            <person name="Morf L."/>
            <person name="Marolda C.L."/>
            <person name="Callewaert N."/>
            <person name="Valvano M.A."/>
            <person name="Feldman M.F."/>
            <person name="Aebi M."/>
        </authorList>
    </citation>
    <scope>FUNCTION</scope>
    <scope>PATHWAY</scope>
    <scope>DISRUPTION PHENOTYPE</scope>
    <scope>MUTAGENESIS OF LYS-388; SER-389; GLY-488; ARG-492 AND LEU-506</scope>
    <scope>CATALYTIC ACTIVITY</scope>
    <source>
        <strain>ATCC 700819 / NCTC 11168</strain>
    </source>
</reference>
<reference key="4">
    <citation type="journal article" date="2006" name="J. Bacteriol.">
        <title>Biosynthesis of the N-linked glycan in Campylobacter jejuni and addition onto protein through block transfer.</title>
        <authorList>
            <person name="Kelly J."/>
            <person name="Jarrell H."/>
            <person name="Millar L."/>
            <person name="Tessier L."/>
            <person name="Fiori L.M."/>
            <person name="Lau P.C."/>
            <person name="Allan B."/>
            <person name="Szymanski C.M."/>
        </authorList>
    </citation>
    <scope>FUNCTION</scope>
    <source>
        <strain>ATCC 700819 / NCTC 11168</strain>
    </source>
</reference>
<reference key="5">
    <citation type="journal article" date="2015" name="Nature">
        <title>Structure and mechanism of an active lipid-linked oligosaccharide flippase.</title>
        <authorList>
            <person name="Perez C."/>
            <person name="Gerber S."/>
            <person name="Boilevin J."/>
            <person name="Bucher M."/>
            <person name="Darbre T."/>
            <person name="Aebi M."/>
            <person name="Reymond J.L."/>
            <person name="Locher K.P."/>
        </authorList>
    </citation>
    <scope>X-RAY CRYSTALLOGRAPHY (2.90 ANGSTROMS)</scope>
    <scope>FUNCTION</scope>
    <scope>SUBCELLULAR LOCATION</scope>
    <scope>TOPOLOGY</scope>
    <scope>PATHWAY</scope>
    <scope>DOMAIN</scope>
    <scope>CATALYTIC ACTIVITY</scope>
    <scope>SUBUNIT</scope>
    <scope>REGION</scope>
    <scope>MUTAGENESIS OF 46-SER--PRO-67; TYR-50; 53-ARG--LYS-55; TYR-56; TYR-63; ARG-86; ARG-260; ARG-302; ARG-309 AND GLU-510</scope>
</reference>